<feature type="chain" id="PRO_0000087575" description="Dense granule protein 2">
    <location>
        <begin position="1"/>
        <end position="193"/>
    </location>
</feature>
<feature type="transmembrane region" description="Helical" evidence="1">
    <location>
        <begin position="14"/>
        <end position="34"/>
    </location>
</feature>
<feature type="transmembrane region" description="Helical" evidence="1">
    <location>
        <begin position="153"/>
        <end position="173"/>
    </location>
</feature>
<feature type="region of interest" description="Disordered" evidence="2">
    <location>
        <begin position="75"/>
        <end position="140"/>
    </location>
</feature>
<feature type="region of interest" description="Disordered" evidence="2">
    <location>
        <begin position="174"/>
        <end position="193"/>
    </location>
</feature>
<feature type="compositionally biased region" description="Acidic residues" evidence="2">
    <location>
        <begin position="88"/>
        <end position="98"/>
    </location>
</feature>
<feature type="glycosylation site" description="N-linked (GlcNAc...) asparagine" evidence="1">
    <location>
        <position position="4"/>
    </location>
</feature>
<feature type="glycosylation site" description="N-linked (GlcNAc...) asparagine" evidence="1">
    <location>
        <position position="74"/>
    </location>
</feature>
<feature type="sequence conflict" description="In Ref. 2; AAC47097." evidence="3" ref="2">
    <original>GTSE</original>
    <variation>NSAR</variation>
    <location>
        <begin position="67"/>
        <end position="70"/>
    </location>
</feature>
<sequence>MANNRTLARRRRAFSPLTVVMLAVTLVAFMGVPLSSTGAADAADPVESVEANRRGYTSYGEPPVAVGTSEEYVNSSELAGSRDKGNAEAEEEAAEVETDVQPSSVTIDTEERAAPSQVQVQQERMEEADDAPKPVPVRSAVPSTVAKRQQARHRVIGTAVIAAVVAALLWKFSRRRSGAPREGGENENGGEEK</sequence>
<gene>
    <name type="primary">DG2</name>
</gene>
<dbReference type="EMBL" id="AF029350">
    <property type="protein sequence ID" value="AAC39122.1"/>
    <property type="molecule type" value="mRNA"/>
</dbReference>
<dbReference type="EMBL" id="U36387">
    <property type="protein sequence ID" value="AAC47097.1"/>
    <property type="molecule type" value="mRNA"/>
</dbReference>
<dbReference type="SMR" id="Q25540"/>
<dbReference type="GlyCosmos" id="Q25540">
    <property type="glycosylation" value="2 sites, No reported glycans"/>
</dbReference>
<dbReference type="VEuPathDB" id="ToxoDB:Ncaninum_LIV_000459700"/>
<dbReference type="VEuPathDB" id="ToxoDB:NCLIV_052880"/>
<dbReference type="OMA" id="RQKRNFC"/>
<dbReference type="GO" id="GO:0016020">
    <property type="term" value="C:membrane"/>
    <property type="evidence" value="ECO:0007669"/>
    <property type="project" value="UniProtKB-SubCell"/>
</dbReference>
<dbReference type="InterPro" id="IPR008119">
    <property type="entry name" value="Gra6_protein"/>
</dbReference>
<dbReference type="Pfam" id="PF05084">
    <property type="entry name" value="GRA6"/>
    <property type="match status" value="1"/>
</dbReference>
<dbReference type="PIRSF" id="PIRSF037504">
    <property type="entry name" value="Gra6_protein"/>
    <property type="match status" value="1"/>
</dbReference>
<dbReference type="PRINTS" id="PR01746">
    <property type="entry name" value="DENSEGRNULE6"/>
</dbReference>
<comment type="subcellular location">
    <subcellularLocation>
        <location evidence="3">Membrane</location>
        <topology evidence="3">Multi-pass membrane protein</topology>
    </subcellularLocation>
</comment>
<comment type="similarity">
    <text evidence="3">Belongs to the Gra6 family.</text>
</comment>
<accession>Q25540</accession>
<accession>O76215</accession>
<organism>
    <name type="scientific">Neospora caninum</name>
    <name type="common">Coccidian parasite</name>
    <dbReference type="NCBI Taxonomy" id="29176"/>
    <lineage>
        <taxon>Eukaryota</taxon>
        <taxon>Sar</taxon>
        <taxon>Alveolata</taxon>
        <taxon>Apicomplexa</taxon>
        <taxon>Conoidasida</taxon>
        <taxon>Coccidia</taxon>
        <taxon>Eucoccidiorida</taxon>
        <taxon>Eimeriorina</taxon>
        <taxon>Sarcocystidae</taxon>
        <taxon>Neospora</taxon>
    </lineage>
</organism>
<name>GRA2_NEOCA</name>
<proteinExistence type="evidence at transcript level"/>
<protein>
    <recommendedName>
        <fullName>Dense granule protein 2</fullName>
    </recommendedName>
    <alternativeName>
        <fullName>Antigen Nc14.1</fullName>
    </alternativeName>
    <alternativeName>
        <fullName>NcDG2</fullName>
    </alternativeName>
</protein>
<keyword id="KW-0325">Glycoprotein</keyword>
<keyword id="KW-0472">Membrane</keyword>
<keyword id="KW-0812">Transmembrane</keyword>
<keyword id="KW-1133">Transmembrane helix</keyword>
<evidence type="ECO:0000255" key="1"/>
<evidence type="ECO:0000256" key="2">
    <source>
        <dbReference type="SAM" id="MobiDB-lite"/>
    </source>
</evidence>
<evidence type="ECO:0000305" key="3"/>
<reference key="1">
    <citation type="journal article" date="1998" name="Mol. Biochem. Parasitol.">
        <title>Isolation of the cDNA encoding a dense granule associated antigen (NCDG2) of Neospora caninum.</title>
        <authorList>
            <person name="Liddell S."/>
            <person name="Lally N.C."/>
            <person name="Jenkins M.C."/>
            <person name="Dubey J.P."/>
        </authorList>
    </citation>
    <scope>NUCLEOTIDE SEQUENCE [MRNA]</scope>
    <source>
        <strain>Nc-1</strain>
    </source>
</reference>
<reference key="2">
    <citation type="journal article" date="1996" name="Clin. Diagn. Lab. Immunol.">
        <title>Evaluation of two Neospora caninum recombinant antigens for use in an enzyme-linked immunosorbent assay for the diagnosis of bovine neosporosis.</title>
        <authorList>
            <person name="Lally N.C."/>
            <person name="Jenkins M.C."/>
            <person name="Dubey J.P."/>
        </authorList>
    </citation>
    <scope>NUCLEOTIDE SEQUENCE [MRNA] OF 67-193</scope>
    <source>
        <strain>Nc-1</strain>
    </source>
</reference>